<protein>
    <recommendedName>
        <fullName>Biotin sulfoxide reductase</fullName>
        <shortName>BDS reductase</shortName>
        <shortName>BSO reductase</shortName>
        <ecNumber>1.-.-.-</ecNumber>
    </recommendedName>
    <alternativeName>
        <fullName>L-methionine-(S)-sulfoxide reductase</fullName>
        <shortName>Met-S-SO reductase</shortName>
        <ecNumber>1.8.4.13</ecNumber>
    </alternativeName>
</protein>
<feature type="chain" id="PRO_0000063219" description="Biotin sulfoxide reductase">
    <location>
        <begin position="1"/>
        <end position="777"/>
    </location>
</feature>
<feature type="binding site" evidence="1">
    <location>
        <position position="148"/>
    </location>
    <ligand>
        <name>Mo-bis(molybdopterin guanine dinucleotide)</name>
        <dbReference type="ChEBI" id="CHEBI:60539"/>
    </ligand>
    <ligandPart>
        <name>Mo</name>
        <dbReference type="ChEBI" id="CHEBI:28685"/>
    </ligandPart>
</feature>
<feature type="sequence conflict" description="In Ref. 1; AAA23522." evidence="4" ref="1">
    <original>DFCRDPLAH</original>
    <variation>AFLPRSAGD</variation>
    <location>
        <begin position="583"/>
        <end position="591"/>
    </location>
</feature>
<feature type="sequence conflict" description="In Ref. 1; AAA23522." evidence="4" ref="1">
    <original>ASG</original>
    <variation>QR</variation>
    <location>
        <begin position="596"/>
        <end position="598"/>
    </location>
</feature>
<feature type="sequence conflict" description="In Ref. 1; AAA23522." evidence="4" ref="1">
    <original>NGCAGNTALAWLEKYNGPELTLTAFEPPASS</original>
    <variation>MAVRVIRRWHGWKNTTVRN</variation>
    <location>
        <begin position="747"/>
        <end position="777"/>
    </location>
</feature>
<reference key="1">
    <citation type="journal article" date="1990" name="J. Bacteriol.">
        <title>Cloning and nucleotide sequence of bisC, the structural gene for biotin sulfoxide reductase in Escherichia coli.</title>
        <authorList>
            <person name="Pierson D.E."/>
            <person name="Campbell A."/>
        </authorList>
    </citation>
    <scope>NUCLEOTIDE SEQUENCE [GENOMIC DNA]</scope>
    <scope>FUNCTION</scope>
</reference>
<reference key="2">
    <citation type="journal article" date="1994" name="Nucleic Acids Res.">
        <title>Analysis of the Escherichia coli genome. V. DNA sequence of the region from 76.0 to 81.5 minutes.</title>
        <authorList>
            <person name="Sofia H.J."/>
            <person name="Burland V."/>
            <person name="Daniels D.L."/>
            <person name="Plunkett G. III"/>
            <person name="Blattner F.R."/>
        </authorList>
    </citation>
    <scope>NUCLEOTIDE SEQUENCE [LARGE SCALE GENOMIC DNA]</scope>
    <source>
        <strain>K12 / MG1655 / ATCC 47076</strain>
    </source>
</reference>
<reference key="3">
    <citation type="journal article" date="1997" name="Science">
        <title>The complete genome sequence of Escherichia coli K-12.</title>
        <authorList>
            <person name="Blattner F.R."/>
            <person name="Plunkett G. III"/>
            <person name="Bloch C.A."/>
            <person name="Perna N.T."/>
            <person name="Burland V."/>
            <person name="Riley M."/>
            <person name="Collado-Vides J."/>
            <person name="Glasner J.D."/>
            <person name="Rode C.K."/>
            <person name="Mayhew G.F."/>
            <person name="Gregor J."/>
            <person name="Davis N.W."/>
            <person name="Kirkpatrick H.A."/>
            <person name="Goeden M.A."/>
            <person name="Rose D.J."/>
            <person name="Mau B."/>
            <person name="Shao Y."/>
        </authorList>
    </citation>
    <scope>NUCLEOTIDE SEQUENCE [LARGE SCALE GENOMIC DNA]</scope>
    <source>
        <strain>K12 / MG1655 / ATCC 47076</strain>
    </source>
</reference>
<reference key="4">
    <citation type="journal article" date="2006" name="Mol. Syst. Biol.">
        <title>Highly accurate genome sequences of Escherichia coli K-12 strains MG1655 and W3110.</title>
        <authorList>
            <person name="Hayashi K."/>
            <person name="Morooka N."/>
            <person name="Yamamoto Y."/>
            <person name="Fujita K."/>
            <person name="Isono K."/>
            <person name="Choi S."/>
            <person name="Ohtsubo E."/>
            <person name="Baba T."/>
            <person name="Wanner B.L."/>
            <person name="Mori H."/>
            <person name="Horiuchi T."/>
        </authorList>
    </citation>
    <scope>NUCLEOTIDE SEQUENCE [LARGE SCALE GENOMIC DNA]</scope>
    <source>
        <strain>K12 / W3110 / ATCC 27325 / DSM 5911</strain>
    </source>
</reference>
<reference key="5">
    <citation type="journal article" date="1982" name="J. Bacteriol.">
        <title>Molybdenum cofactor requirement for biotin sulfoxide reduction in Escherichia coli.</title>
        <authorList>
            <person name="del Campillo-Campbell A."/>
            <person name="Campbell A."/>
        </authorList>
    </citation>
    <scope>COFACTOR</scope>
</reference>
<reference key="6">
    <citation type="journal article" date="2005" name="J. Bacteriol.">
        <title>Methionine sulfoxide reduction and assimilation in Escherichia coli: new role for the biotin sulfoxide reductase BisC.</title>
        <authorList>
            <person name="Ezraty B."/>
            <person name="Bos J."/>
            <person name="Barras F."/>
            <person name="Aussel L."/>
        </authorList>
    </citation>
    <scope>FUNCTION AS A METHIONINE SULFOXIDE REDUCTASE</scope>
    <scope>CATALYTIC ACTIVITY</scope>
    <scope>SUBSTRATE SPECIFICITY</scope>
    <scope>KINETIC PARAMETERS</scope>
    <scope>COFACTOR</scope>
    <scope>DOMAIN</scope>
    <scope>DISRUPTION PHENOTYPE</scope>
</reference>
<organism>
    <name type="scientific">Escherichia coli (strain K12)</name>
    <dbReference type="NCBI Taxonomy" id="83333"/>
    <lineage>
        <taxon>Bacteria</taxon>
        <taxon>Pseudomonadati</taxon>
        <taxon>Pseudomonadota</taxon>
        <taxon>Gammaproteobacteria</taxon>
        <taxon>Enterobacterales</taxon>
        <taxon>Enterobacteriaceae</taxon>
        <taxon>Escherichia</taxon>
    </lineage>
</organism>
<dbReference type="EC" id="1.-.-.-"/>
<dbReference type="EC" id="1.8.4.13"/>
<dbReference type="EMBL" id="M34827">
    <property type="protein sequence ID" value="AAA23522.1"/>
    <property type="status" value="ALT_FRAME"/>
    <property type="molecule type" value="Genomic_DNA"/>
</dbReference>
<dbReference type="EMBL" id="U00039">
    <property type="protein sequence ID" value="AAB18528.1"/>
    <property type="status" value="ALT_INIT"/>
    <property type="molecule type" value="Genomic_DNA"/>
</dbReference>
<dbReference type="EMBL" id="U00096">
    <property type="protein sequence ID" value="AAC76575.3"/>
    <property type="molecule type" value="Genomic_DNA"/>
</dbReference>
<dbReference type="EMBL" id="AP009048">
    <property type="protein sequence ID" value="BAE77744.1"/>
    <property type="status" value="ALT_INIT"/>
    <property type="molecule type" value="Genomic_DNA"/>
</dbReference>
<dbReference type="PIR" id="S47772">
    <property type="entry name" value="S47772"/>
</dbReference>
<dbReference type="RefSeq" id="NP_418007.3">
    <property type="nucleotide sequence ID" value="NC_000913.3"/>
</dbReference>
<dbReference type="RefSeq" id="WP_000013950.1">
    <property type="nucleotide sequence ID" value="NZ_SSZK01000068.1"/>
</dbReference>
<dbReference type="SMR" id="P20099"/>
<dbReference type="BioGRID" id="4261247">
    <property type="interactions" value="15"/>
</dbReference>
<dbReference type="FunCoup" id="P20099">
    <property type="interactions" value="40"/>
</dbReference>
<dbReference type="STRING" id="511145.b3551"/>
<dbReference type="TCDB" id="5.A.3.4.3">
    <property type="family name" value="the prokaryotic molybdopterin-containing oxidoreductase (pmo) family"/>
</dbReference>
<dbReference type="jPOST" id="P20099"/>
<dbReference type="PaxDb" id="511145-b3551"/>
<dbReference type="EnsemblBacteria" id="AAC76575">
    <property type="protein sequence ID" value="AAC76575"/>
    <property type="gene ID" value="b3551"/>
</dbReference>
<dbReference type="GeneID" id="946915"/>
<dbReference type="KEGG" id="ecj:JW5940"/>
<dbReference type="KEGG" id="eco:b3551"/>
<dbReference type="PATRIC" id="fig|1411691.4.peg.3163"/>
<dbReference type="EchoBASE" id="EB0122"/>
<dbReference type="eggNOG" id="COG0243">
    <property type="taxonomic scope" value="Bacteria"/>
</dbReference>
<dbReference type="HOGENOM" id="CLU_000422_13_3_6"/>
<dbReference type="InParanoid" id="P20099"/>
<dbReference type="OMA" id="LEPDEWH"/>
<dbReference type="OrthoDB" id="9815647at2"/>
<dbReference type="PhylomeDB" id="P20099"/>
<dbReference type="BioCyc" id="EcoCyc:EG10124-MONOMER"/>
<dbReference type="BioCyc" id="MetaCyc:EG10124-MONOMER"/>
<dbReference type="SABIO-RK" id="P20099"/>
<dbReference type="PRO" id="PR:P20099"/>
<dbReference type="Proteomes" id="UP000000625">
    <property type="component" value="Chromosome"/>
</dbReference>
<dbReference type="GO" id="GO:0030288">
    <property type="term" value="C:outer membrane-bounded periplasmic space"/>
    <property type="evidence" value="ECO:0000318"/>
    <property type="project" value="GO_Central"/>
</dbReference>
<dbReference type="GO" id="GO:0009055">
    <property type="term" value="F:electron transfer activity"/>
    <property type="evidence" value="ECO:0000318"/>
    <property type="project" value="GO_Central"/>
</dbReference>
<dbReference type="GO" id="GO:0033744">
    <property type="term" value="F:L-methionine:thioredoxin-disulfide S-oxidoreductase activity"/>
    <property type="evidence" value="ECO:0000314"/>
    <property type="project" value="EcoCyc"/>
</dbReference>
<dbReference type="GO" id="GO:0030151">
    <property type="term" value="F:molybdenum ion binding"/>
    <property type="evidence" value="ECO:0000315"/>
    <property type="project" value="EcoCyc"/>
</dbReference>
<dbReference type="GO" id="GO:0043546">
    <property type="term" value="F:molybdopterin cofactor binding"/>
    <property type="evidence" value="ECO:0007669"/>
    <property type="project" value="InterPro"/>
</dbReference>
<dbReference type="GO" id="GO:0009061">
    <property type="term" value="P:anaerobic respiration"/>
    <property type="evidence" value="ECO:0000318"/>
    <property type="project" value="GO_Central"/>
</dbReference>
<dbReference type="CDD" id="cd02793">
    <property type="entry name" value="MopB_CT_DMSOR-BSOR-TMAOR"/>
    <property type="match status" value="1"/>
</dbReference>
<dbReference type="CDD" id="cd02769">
    <property type="entry name" value="MopB_DMSOR-BSOR-TMAOR"/>
    <property type="match status" value="1"/>
</dbReference>
<dbReference type="FunFam" id="2.40.40.20:FF:000009">
    <property type="entry name" value="Biotin sulfoxide reductase 2"/>
    <property type="match status" value="1"/>
</dbReference>
<dbReference type="FunFam" id="3.40.228.10:FF:000003">
    <property type="entry name" value="Biotin sulfoxide reductase 2"/>
    <property type="match status" value="1"/>
</dbReference>
<dbReference type="Gene3D" id="2.40.40.20">
    <property type="match status" value="1"/>
</dbReference>
<dbReference type="Gene3D" id="3.40.50.740">
    <property type="match status" value="1"/>
</dbReference>
<dbReference type="Gene3D" id="3.40.228.10">
    <property type="entry name" value="Dimethylsulfoxide Reductase, domain 2"/>
    <property type="match status" value="1"/>
</dbReference>
<dbReference type="Gene3D" id="3.90.55.10">
    <property type="entry name" value="Dimethylsulfoxide Reductase, domain 3"/>
    <property type="match status" value="1"/>
</dbReference>
<dbReference type="InterPro" id="IPR009010">
    <property type="entry name" value="Asp_de-COase-like_dom_sf"/>
</dbReference>
<dbReference type="InterPro" id="IPR006658">
    <property type="entry name" value="BisC"/>
</dbReference>
<dbReference type="InterPro" id="IPR041954">
    <property type="entry name" value="CT_DMSOR/BSOR/TMAOR"/>
</dbReference>
<dbReference type="InterPro" id="IPR006657">
    <property type="entry name" value="MoPterin_dinucl-bd_dom"/>
</dbReference>
<dbReference type="InterPro" id="IPR006656">
    <property type="entry name" value="Mopterin_OxRdtase"/>
</dbReference>
<dbReference type="InterPro" id="IPR006655">
    <property type="entry name" value="Mopterin_OxRdtase_prok_CS"/>
</dbReference>
<dbReference type="InterPro" id="IPR050612">
    <property type="entry name" value="Prok_Mopterin_Oxidored"/>
</dbReference>
<dbReference type="NCBIfam" id="TIGR00509">
    <property type="entry name" value="bisC_fam"/>
    <property type="match status" value="1"/>
</dbReference>
<dbReference type="PANTHER" id="PTHR43742:SF5">
    <property type="entry name" value="BIOTIN SULFOXIDE REDUCTASE"/>
    <property type="match status" value="1"/>
</dbReference>
<dbReference type="PANTHER" id="PTHR43742">
    <property type="entry name" value="TRIMETHYLAMINE-N-OXIDE REDUCTASE"/>
    <property type="match status" value="1"/>
</dbReference>
<dbReference type="Pfam" id="PF00384">
    <property type="entry name" value="Molybdopterin"/>
    <property type="match status" value="1"/>
</dbReference>
<dbReference type="Pfam" id="PF01568">
    <property type="entry name" value="Molydop_binding"/>
    <property type="match status" value="1"/>
</dbReference>
<dbReference type="SUPFAM" id="SSF50692">
    <property type="entry name" value="ADC-like"/>
    <property type="match status" value="1"/>
</dbReference>
<dbReference type="SUPFAM" id="SSF53706">
    <property type="entry name" value="Formate dehydrogenase/DMSO reductase, domains 1-3"/>
    <property type="match status" value="1"/>
</dbReference>
<dbReference type="PROSITE" id="PS00490">
    <property type="entry name" value="MOLYBDOPTERIN_PROK_2"/>
    <property type="match status" value="1"/>
</dbReference>
<dbReference type="PROSITE" id="PS00932">
    <property type="entry name" value="MOLYBDOPTERIN_PROK_3"/>
    <property type="match status" value="1"/>
</dbReference>
<name>BISC_ECOLI</name>
<evidence type="ECO:0000250" key="1"/>
<evidence type="ECO:0000269" key="2">
    <source>
    </source>
</evidence>
<evidence type="ECO:0000269" key="3">
    <source>
    </source>
</evidence>
<evidence type="ECO:0000305" key="4"/>
<evidence type="ECO:0000305" key="5">
    <source>
    </source>
</evidence>
<evidence type="ECO:0000305" key="6">
    <source>
    </source>
</evidence>
<comment type="function">
    <text evidence="2 3">This enzyme may serve as a scavenger, allowing the cell to utilize biotin sulfoxide as a biotin source. It reduces a spontaneous oxidation product of biotin, D-biotin D-sulfoxide (BSO or BDS), back to biotin. Also exhibits methionine-(S)-sulfoxide (Met-S-SO) reductase activity, acting specifically on the (S) enantiomer in the free, but not the protein-bound form. It thus plays a role in assimilation of oxidized methionines.</text>
</comment>
<comment type="catalytic activity">
    <reaction evidence="2">
        <text>[thioredoxin]-disulfide + L-methionine + H2O = L-methionine (S)-S-oxide + [thioredoxin]-dithiol</text>
        <dbReference type="Rhea" id="RHEA:19993"/>
        <dbReference type="Rhea" id="RHEA-COMP:10698"/>
        <dbReference type="Rhea" id="RHEA-COMP:10700"/>
        <dbReference type="ChEBI" id="CHEBI:15377"/>
        <dbReference type="ChEBI" id="CHEBI:29950"/>
        <dbReference type="ChEBI" id="CHEBI:50058"/>
        <dbReference type="ChEBI" id="CHEBI:57844"/>
        <dbReference type="ChEBI" id="CHEBI:58772"/>
        <dbReference type="EC" id="1.8.4.13"/>
    </reaction>
</comment>
<comment type="cofactor">
    <cofactor evidence="5 6">
        <name>Mo-bis(molybdopterin guanine dinucleotide)</name>
        <dbReference type="ChEBI" id="CHEBI:60539"/>
    </cofactor>
    <text evidence="5 6">Binds 1 molybdenum-bis(molybdopterin guanine dinucleotide) (Mo-bis-MGD) cofactor per subunit.</text>
</comment>
<comment type="biophysicochemical properties">
    <kinetics>
        <KM evidence="2">17 uM for L-methionine (S)-S-oxide</KM>
        <text>kcat is 3.2 min(-1) for the reduction of Met-S-SO using benzyl viologen as an artificial electron donor.</text>
    </kinetics>
</comment>
<comment type="domain">
    <text evidence="2">The N-terminal 39 residues are essential for activity.</text>
</comment>
<comment type="disruption phenotype">
    <text evidence="2">Cells lacking this gene together with metB1, msrA and msrB are unable to use Met-S-SO for growth but retain the ability to use the enantiomer Met-R-SO, while a metB1/msrA/msrB deletion mutant is able to use both compounds.</text>
</comment>
<comment type="miscellaneous">
    <text>Requires a small thioredoxin-like protein for activity.</text>
</comment>
<comment type="similarity">
    <text evidence="4">Belongs to the prokaryotic molybdopterin-containing oxidoreductase family.</text>
</comment>
<comment type="sequence caution" evidence="4">
    <conflict type="erroneous initiation">
        <sequence resource="EMBL-CDS" id="AAB18528"/>
    </conflict>
</comment>
<comment type="sequence caution" evidence="4">
    <conflict type="erroneous initiation">
        <sequence resource="EMBL-CDS" id="BAE77744"/>
    </conflict>
</comment>
<gene>
    <name type="primary">bisC</name>
    <name type="ordered locus">b3551</name>
    <name type="ordered locus">JW5940</name>
</gene>
<accession>P20099</accession>
<accession>Q2M7L2</accession>
<keyword id="KW-0479">Metal-binding</keyword>
<keyword id="KW-0500">Molybdenum</keyword>
<keyword id="KW-0560">Oxidoreductase</keyword>
<keyword id="KW-1185">Reference proteome</keyword>
<proteinExistence type="evidence at protein level"/>
<sequence length="777" mass="85851">MANSSSRYSVLTAAHWGPMLVETDGETVFSSRGALATGMENSLQSAVRDQVHSNTRVRFPMVRKGFLASPENPQGIRGQDEFVRVSWDEALDLIHQQHKRIREAYGPASIFAGSYGWRSNGVLHKASTLLQRYMALAGGYTGHLGDYSTGAAQAIMPYVVGGSEVYQQQTSWPLVLEHSDVVVLWSANPLNTLKIAWNASDEQGLSYFSALRDSGKKLICIDPMRSETVDFFGDKMEWVAPHMGTDVALMLGIAHTLVENGWHDEAFLARCTTGYAVFASYLLGESDGIAKTAEWAAEICGVGAAKIRELAAIFHQNTTMLMAGWGMQRQQFGEQKHWMIVTLAAMLGQIGTPGGGFGLSYHFANGGNPTRRSAVLSSMQGSLPGGCDAVDKIPVARIVEALENPGGAYQHNGMNRHFPDIRFIWWAGGANFTHHQDTNRLIRAWQKPELVVISECFWTAAAKHADIVLPATTSFERNDLTMTGDYSNQHLVPMKQVVPPRYEARNDFDVFAELSERWEKGGYARFTEGKSELQWLETFYNVARQRGASQQVELPPFAEFWQANQLIEMPENPDSERFIRFADFCRDPLAHPLKTASGKIEIFSQRIADYGYPDCPGHPMWLEPDEWQGNAEPEQLQVLSAHPAHRLHSQLNYSSLRELYAVANREPVTIHPDDAQERGIQDGDTVRLWNARGQILAGAVISEGIKPGVICIHEGAWPDLDLTADGICKNGAVNVLTKDLPSSRLGNGCAGNTALAWLEKYNGPELTLTAFEPPASS</sequence>